<protein>
    <recommendedName>
        <fullName evidence="5">Feruloyl CoA ortho-hydroxylase F6H1-1</fullName>
        <shortName evidence="5">IbF6H1-1</shortName>
        <ecNumber evidence="2 4">1.14.11.61</ecNumber>
    </recommendedName>
    <alternativeName>
        <fullName evidence="5">2-oxoglutarate-dependent dioxygenase F6H1-1</fullName>
        <shortName evidence="5">2OGD F6H1-1</shortName>
    </alternativeName>
</protein>
<name>F6H11_IPOBA</name>
<sequence>MPAVLSSVLSNITDFVVHEGNGVKGLADMGLEALPKQYVQPEEERITTSTVIVDDTIPVIDLSEWGSDPKVGDMNCEAAEKWGFFQIVNHGVPLEVLEEVKAATYRFFRLPAEEKNKHSKDNSPSNNVRYGTSFTPHAEKALEWKDFLSLFYVSDEEAAALWPSACRDEALTFMRNCDAVIKRLLKSLMKGLNVTEIDGTKESLLMGSKRINMNYYPKCPNPELTVGVGRHSDVSTLTILLQDQIGGLYVRKLDSDEWVHVPPINGAIVINVGDALQILSNGRYKSIEHRVIANGSNNRISVPIFVNPRPNDVIGPLPELLESGEKAVYKNVLYSDYVKHFFRKAHDGKETVDFAKIN</sequence>
<keyword id="KW-0223">Dioxygenase</keyword>
<keyword id="KW-0408">Iron</keyword>
<keyword id="KW-0479">Metal-binding</keyword>
<keyword id="KW-0560">Oxidoreductase</keyword>
<organism>
    <name type="scientific">Ipomoea batatas</name>
    <name type="common">Sweet potato</name>
    <name type="synonym">Convolvulus batatas</name>
    <dbReference type="NCBI Taxonomy" id="4120"/>
    <lineage>
        <taxon>Eukaryota</taxon>
        <taxon>Viridiplantae</taxon>
        <taxon>Streptophyta</taxon>
        <taxon>Embryophyta</taxon>
        <taxon>Tracheophyta</taxon>
        <taxon>Spermatophyta</taxon>
        <taxon>Magnoliopsida</taxon>
        <taxon>eudicotyledons</taxon>
        <taxon>Gunneridae</taxon>
        <taxon>Pentapetalae</taxon>
        <taxon>asterids</taxon>
        <taxon>lamiids</taxon>
        <taxon>Solanales</taxon>
        <taxon>Convolvulaceae</taxon>
        <taxon>Ipomoeeae</taxon>
        <taxon>Ipomoea</taxon>
    </lineage>
</organism>
<comment type="function">
    <text evidence="2 7">2-oxoglutarate (OG)- and Fe(II)-dependent dioxygenase (2OGD) involved in scopoletin biosynthesis (Probable). Converts feruloyl CoA into 6'-hydroxyferuloyl CoA (By similarity).</text>
</comment>
<comment type="catalytic activity">
    <reaction evidence="2">
        <text>(E)-feruloyl-CoA + 2-oxoglutarate + O2 = (E)-6-hydroxyferuloyl-CoA + succinate + CO2</text>
        <dbReference type="Rhea" id="RHEA:57856"/>
        <dbReference type="ChEBI" id="CHEBI:15379"/>
        <dbReference type="ChEBI" id="CHEBI:16526"/>
        <dbReference type="ChEBI" id="CHEBI:16810"/>
        <dbReference type="ChEBI" id="CHEBI:30031"/>
        <dbReference type="ChEBI" id="CHEBI:87305"/>
        <dbReference type="ChEBI" id="CHEBI:142390"/>
        <dbReference type="EC" id="1.14.11.61"/>
    </reaction>
</comment>
<comment type="cofactor">
    <cofactor evidence="3">
        <name>L-ascorbate</name>
        <dbReference type="ChEBI" id="CHEBI:38290"/>
    </cofactor>
</comment>
<comment type="cofactor">
    <cofactor evidence="4">
        <name>Fe(2+)</name>
        <dbReference type="ChEBI" id="CHEBI:29033"/>
    </cofactor>
    <text evidence="4">Binds 1 Fe(2+) ion per subunit.</text>
</comment>
<comment type="pathway">
    <text evidence="7">Phenylpropanoid metabolism.</text>
</comment>
<comment type="similarity">
    <text evidence="6">Belongs to the iron/ascorbate-dependent oxidoreductase family.</text>
</comment>
<dbReference type="EC" id="1.14.11.61" evidence="2 4"/>
<dbReference type="EMBL" id="AB636149">
    <property type="protein sequence ID" value="BAL22343.1"/>
    <property type="molecule type" value="mRNA"/>
</dbReference>
<dbReference type="SMR" id="G9M9M0"/>
<dbReference type="GO" id="GO:0016706">
    <property type="term" value="F:2-oxoglutarate-dependent dioxygenase activity"/>
    <property type="evidence" value="ECO:0000250"/>
    <property type="project" value="UniProtKB"/>
</dbReference>
<dbReference type="GO" id="GO:0046872">
    <property type="term" value="F:metal ion binding"/>
    <property type="evidence" value="ECO:0007669"/>
    <property type="project" value="UniProtKB-KW"/>
</dbReference>
<dbReference type="GO" id="GO:0009805">
    <property type="term" value="P:coumarin biosynthetic process"/>
    <property type="evidence" value="ECO:0000250"/>
    <property type="project" value="UniProtKB"/>
</dbReference>
<dbReference type="GO" id="GO:0009699">
    <property type="term" value="P:phenylpropanoid biosynthetic process"/>
    <property type="evidence" value="ECO:0000250"/>
    <property type="project" value="UniProtKB"/>
</dbReference>
<dbReference type="GO" id="GO:0002238">
    <property type="term" value="P:response to molecule of fungal origin"/>
    <property type="evidence" value="ECO:0007669"/>
    <property type="project" value="UniProtKB-ARBA"/>
</dbReference>
<dbReference type="FunFam" id="2.60.120.330:FF:000023">
    <property type="entry name" value="Feruloyl CoA ortho-hydroxylase 1"/>
    <property type="match status" value="1"/>
</dbReference>
<dbReference type="Gene3D" id="2.60.120.330">
    <property type="entry name" value="B-lactam Antibiotic, Isopenicillin N Synthase, Chain"/>
    <property type="match status" value="1"/>
</dbReference>
<dbReference type="InterPro" id="IPR026992">
    <property type="entry name" value="DIOX_N"/>
</dbReference>
<dbReference type="InterPro" id="IPR044861">
    <property type="entry name" value="IPNS-like_FE2OG_OXY"/>
</dbReference>
<dbReference type="InterPro" id="IPR027443">
    <property type="entry name" value="IPNS-like_sf"/>
</dbReference>
<dbReference type="InterPro" id="IPR005123">
    <property type="entry name" value="Oxoglu/Fe-dep_dioxygenase_dom"/>
</dbReference>
<dbReference type="InterPro" id="IPR050295">
    <property type="entry name" value="Plant_2OG-oxidoreductases"/>
</dbReference>
<dbReference type="PANTHER" id="PTHR47991">
    <property type="entry name" value="OXOGLUTARATE/IRON-DEPENDENT DIOXYGENASE"/>
    <property type="match status" value="1"/>
</dbReference>
<dbReference type="Pfam" id="PF03171">
    <property type="entry name" value="2OG-FeII_Oxy"/>
    <property type="match status" value="1"/>
</dbReference>
<dbReference type="Pfam" id="PF14226">
    <property type="entry name" value="DIOX_N"/>
    <property type="match status" value="1"/>
</dbReference>
<dbReference type="SUPFAM" id="SSF51197">
    <property type="entry name" value="Clavaminate synthase-like"/>
    <property type="match status" value="1"/>
</dbReference>
<dbReference type="PROSITE" id="PS51471">
    <property type="entry name" value="FE2OG_OXY"/>
    <property type="match status" value="1"/>
</dbReference>
<accession>G9M9M0</accession>
<reference key="1">
    <citation type="journal article" date="2012" name="Phytochemistry">
        <title>Molecular cloning and functional analysis of the ortho-hydroxylases of p-coumaroyl coenzyme A/feruloyl coenzyme A involved in formation of umbelliferone and scopoletin in sweet potato, Ipomoea batatas (L.) Lam.</title>
        <authorList>
            <person name="Matsumoto S."/>
            <person name="Mizutani M."/>
            <person name="Sakata K."/>
            <person name="Shimizu B."/>
        </authorList>
    </citation>
    <scope>NUCLEOTIDE SEQUENCE [MRNA]</scope>
    <scope>FUNCTION</scope>
    <source>
        <tissue>Root tuber</tissue>
    </source>
</reference>
<feature type="chain" id="PRO_0000447353" description="Feruloyl CoA ortho-hydroxylase F6H1-1">
    <location>
        <begin position="1"/>
        <end position="358"/>
    </location>
</feature>
<feature type="domain" description="Fe2OG dioxygenase" evidence="4">
    <location>
        <begin position="200"/>
        <end position="308"/>
    </location>
</feature>
<feature type="binding site" evidence="1">
    <location>
        <position position="216"/>
    </location>
    <ligand>
        <name>2-oxoglutarate</name>
        <dbReference type="ChEBI" id="CHEBI:16810"/>
    </ligand>
</feature>
<feature type="binding site" evidence="4">
    <location>
        <position position="231"/>
    </location>
    <ligand>
        <name>Fe cation</name>
        <dbReference type="ChEBI" id="CHEBI:24875"/>
    </ligand>
</feature>
<feature type="binding site" evidence="4">
    <location>
        <position position="233"/>
    </location>
    <ligand>
        <name>Fe cation</name>
        <dbReference type="ChEBI" id="CHEBI:24875"/>
    </ligand>
</feature>
<feature type="binding site" evidence="4">
    <location>
        <position position="289"/>
    </location>
    <ligand>
        <name>Fe cation</name>
        <dbReference type="ChEBI" id="CHEBI:24875"/>
    </ligand>
</feature>
<feature type="binding site" evidence="4">
    <location>
        <position position="299"/>
    </location>
    <ligand>
        <name>2-oxoglutarate</name>
        <dbReference type="ChEBI" id="CHEBI:16810"/>
    </ligand>
</feature>
<feature type="binding site" evidence="1">
    <location>
        <position position="301"/>
    </location>
    <ligand>
        <name>2-oxoglutarate</name>
        <dbReference type="ChEBI" id="CHEBI:16810"/>
    </ligand>
</feature>
<evidence type="ECO:0000250" key="1">
    <source>
        <dbReference type="UniProtKB" id="D4N500"/>
    </source>
</evidence>
<evidence type="ECO:0000250" key="2">
    <source>
        <dbReference type="UniProtKB" id="G9M9M1"/>
    </source>
</evidence>
<evidence type="ECO:0000250" key="3">
    <source>
        <dbReference type="UniProtKB" id="Q9C899"/>
    </source>
</evidence>
<evidence type="ECO:0000255" key="4">
    <source>
        <dbReference type="PROSITE-ProRule" id="PRU00805"/>
    </source>
</evidence>
<evidence type="ECO:0000303" key="5">
    <source>
    </source>
</evidence>
<evidence type="ECO:0000305" key="6"/>
<evidence type="ECO:0000305" key="7">
    <source>
    </source>
</evidence>
<gene>
    <name evidence="5" type="primary">F6H1-1</name>
</gene>
<proteinExistence type="evidence at transcript level"/>